<keyword id="KW-0444">Lipid biosynthesis</keyword>
<keyword id="KW-0443">Lipid metabolism</keyword>
<keyword id="KW-0472">Membrane</keyword>
<keyword id="KW-0521">NADP</keyword>
<keyword id="KW-0560">Oxidoreductase</keyword>
<keyword id="KW-0576">Peroxisome</keyword>
<keyword id="KW-1185">Reference proteome</keyword>
<keyword id="KW-0812">Transmembrane</keyword>
<keyword id="KW-1133">Transmembrane helix</keyword>
<comment type="function">
    <text evidence="2">Catalyzes the reduction of saturated but not unsaturated C16 or C18 fatty acyl-CoA to fatty alcohols (FAls). A lower activity can be observed with shorter fatty acyl-CoA substrates. Can produce very long-chain and ultra long-chain FAls, regardless of whether they have a straight or branched chain. Involved in the production of ether lipids/plasmalogens and wax monoesters whose synthesis requires FAls as substrates.</text>
</comment>
<comment type="catalytic activity">
    <reaction evidence="2">
        <text>a long-chain fatty acyl-CoA + 2 NADPH + 2 H(+) = a long-chain primary fatty alcohol + 2 NADP(+) + CoA</text>
        <dbReference type="Rhea" id="RHEA:52716"/>
        <dbReference type="ChEBI" id="CHEBI:15378"/>
        <dbReference type="ChEBI" id="CHEBI:57287"/>
        <dbReference type="ChEBI" id="CHEBI:57783"/>
        <dbReference type="ChEBI" id="CHEBI:58349"/>
        <dbReference type="ChEBI" id="CHEBI:77396"/>
        <dbReference type="ChEBI" id="CHEBI:83139"/>
        <dbReference type="EC" id="1.2.1.84"/>
    </reaction>
    <physiologicalReaction direction="left-to-right" evidence="2">
        <dbReference type="Rhea" id="RHEA:52717"/>
    </physiologicalReaction>
</comment>
<comment type="catalytic activity">
    <reaction evidence="2">
        <text>hexadecanoyl-CoA + 2 NADPH + 2 H(+) = hexadecan-1-ol + 2 NADP(+) + CoA</text>
        <dbReference type="Rhea" id="RHEA:36315"/>
        <dbReference type="ChEBI" id="CHEBI:15378"/>
        <dbReference type="ChEBI" id="CHEBI:16125"/>
        <dbReference type="ChEBI" id="CHEBI:57287"/>
        <dbReference type="ChEBI" id="CHEBI:57379"/>
        <dbReference type="ChEBI" id="CHEBI:57783"/>
        <dbReference type="ChEBI" id="CHEBI:58349"/>
        <dbReference type="EC" id="1.2.1.84"/>
    </reaction>
    <physiologicalReaction direction="left-to-right" evidence="2">
        <dbReference type="Rhea" id="RHEA:36316"/>
    </physiologicalReaction>
</comment>
<comment type="catalytic activity">
    <reaction evidence="1">
        <text>octadecanoyl-CoA + 2 NADPH + 2 H(+) = octadecan-1-ol + 2 NADP(+) + CoA</text>
        <dbReference type="Rhea" id="RHEA:36319"/>
        <dbReference type="ChEBI" id="CHEBI:15378"/>
        <dbReference type="ChEBI" id="CHEBI:32154"/>
        <dbReference type="ChEBI" id="CHEBI:57287"/>
        <dbReference type="ChEBI" id="CHEBI:57394"/>
        <dbReference type="ChEBI" id="CHEBI:57783"/>
        <dbReference type="ChEBI" id="CHEBI:58349"/>
        <dbReference type="EC" id="1.2.1.84"/>
    </reaction>
    <physiologicalReaction direction="left-to-right" evidence="1">
        <dbReference type="Rhea" id="RHEA:36320"/>
    </physiologicalReaction>
</comment>
<comment type="catalytic activity">
    <reaction evidence="2">
        <text>a very long-chain fatty acyl-CoA + 2 NADPH + 2 H(+) = a very long-chain primary fatty alcohol + 2 NADP(+) + CoA</text>
        <dbReference type="Rhea" id="RHEA:81751"/>
        <dbReference type="ChEBI" id="CHEBI:15378"/>
        <dbReference type="ChEBI" id="CHEBI:57287"/>
        <dbReference type="ChEBI" id="CHEBI:57783"/>
        <dbReference type="ChEBI" id="CHEBI:58349"/>
        <dbReference type="ChEBI" id="CHEBI:138261"/>
        <dbReference type="ChEBI" id="CHEBI:138741"/>
    </reaction>
    <physiologicalReaction direction="left-to-right" evidence="2">
        <dbReference type="Rhea" id="RHEA:81752"/>
    </physiologicalReaction>
</comment>
<comment type="catalytic activity">
    <reaction evidence="2">
        <text>an ultra-long-chain fatty acyl-CoA + 2 NADPH + 2 H(+) = an ultra long-chain primary fatty alcohol + 2 NADP(+) + CoA</text>
        <dbReference type="Rhea" id="RHEA:81755"/>
        <dbReference type="ChEBI" id="CHEBI:15378"/>
        <dbReference type="ChEBI" id="CHEBI:57287"/>
        <dbReference type="ChEBI" id="CHEBI:57783"/>
        <dbReference type="ChEBI" id="CHEBI:58349"/>
        <dbReference type="ChEBI" id="CHEBI:143016"/>
        <dbReference type="ChEBI" id="CHEBI:143018"/>
    </reaction>
    <physiologicalReaction direction="left-to-right" evidence="2">
        <dbReference type="Rhea" id="RHEA:81756"/>
    </physiologicalReaction>
</comment>
<comment type="catalytic activity">
    <reaction evidence="2">
        <text>eicosanoyl-CoA + 2 NADPH + 2 H(+) = eicosan-1-ol + 2 NADP(+) + CoA</text>
        <dbReference type="Rhea" id="RHEA:81727"/>
        <dbReference type="ChEBI" id="CHEBI:15378"/>
        <dbReference type="ChEBI" id="CHEBI:57287"/>
        <dbReference type="ChEBI" id="CHEBI:57380"/>
        <dbReference type="ChEBI" id="CHEBI:57783"/>
        <dbReference type="ChEBI" id="CHEBI:58349"/>
        <dbReference type="ChEBI" id="CHEBI:75627"/>
    </reaction>
    <physiologicalReaction direction="left-to-right" evidence="2">
        <dbReference type="Rhea" id="RHEA:81728"/>
    </physiologicalReaction>
</comment>
<comment type="catalytic activity">
    <reaction evidence="2">
        <text>docosanoyl-CoA + 2 NADPH + 2 H(+) = docosan-1-ol + 2 NADP(+) + CoA</text>
        <dbReference type="Rhea" id="RHEA:81731"/>
        <dbReference type="ChEBI" id="CHEBI:15378"/>
        <dbReference type="ChEBI" id="CHEBI:31000"/>
        <dbReference type="ChEBI" id="CHEBI:57287"/>
        <dbReference type="ChEBI" id="CHEBI:57783"/>
        <dbReference type="ChEBI" id="CHEBI:58349"/>
        <dbReference type="ChEBI" id="CHEBI:65059"/>
    </reaction>
    <physiologicalReaction direction="left-to-right" evidence="2">
        <dbReference type="Rhea" id="RHEA:81732"/>
    </physiologicalReaction>
</comment>
<comment type="catalytic activity">
    <reaction evidence="2">
        <text>tetracosanoyl-CoA + 2 NADPH + 2 H(+) = tetracosan-1-ol + 2 NADP(+) + CoA</text>
        <dbReference type="Rhea" id="RHEA:81735"/>
        <dbReference type="ChEBI" id="CHEBI:15378"/>
        <dbReference type="ChEBI" id="CHEBI:57287"/>
        <dbReference type="ChEBI" id="CHEBI:57783"/>
        <dbReference type="ChEBI" id="CHEBI:58349"/>
        <dbReference type="ChEBI" id="CHEBI:65052"/>
        <dbReference type="ChEBI" id="CHEBI:77413"/>
    </reaction>
    <physiologicalReaction direction="left-to-right" evidence="2">
        <dbReference type="Rhea" id="RHEA:81736"/>
    </physiologicalReaction>
</comment>
<comment type="catalytic activity">
    <reaction evidence="2">
        <text>hexacosanoyl-CoA + 2 NADPH + 2 H(+) = hexacosan-1-ol + 2 NADP(+) + CoA</text>
        <dbReference type="Rhea" id="RHEA:81739"/>
        <dbReference type="ChEBI" id="CHEBI:15378"/>
        <dbReference type="ChEBI" id="CHEBI:28415"/>
        <dbReference type="ChEBI" id="CHEBI:57287"/>
        <dbReference type="ChEBI" id="CHEBI:57783"/>
        <dbReference type="ChEBI" id="CHEBI:58349"/>
        <dbReference type="ChEBI" id="CHEBI:64868"/>
    </reaction>
    <physiologicalReaction direction="left-to-right" evidence="2">
        <dbReference type="Rhea" id="RHEA:81740"/>
    </physiologicalReaction>
</comment>
<comment type="catalytic activity">
    <reaction evidence="2">
        <text>octacosanoyl-CoA + 2 NADPH + 2 H(+) = octacosan-1-ol + 2 NADP(+) + CoA</text>
        <dbReference type="Rhea" id="RHEA:81743"/>
        <dbReference type="ChEBI" id="CHEBI:15378"/>
        <dbReference type="ChEBI" id="CHEBI:28243"/>
        <dbReference type="ChEBI" id="CHEBI:57287"/>
        <dbReference type="ChEBI" id="CHEBI:57783"/>
        <dbReference type="ChEBI" id="CHEBI:58349"/>
        <dbReference type="ChEBI" id="CHEBI:74141"/>
    </reaction>
    <physiologicalReaction direction="left-to-right" evidence="2">
        <dbReference type="Rhea" id="RHEA:81744"/>
    </physiologicalReaction>
</comment>
<comment type="catalytic activity">
    <reaction evidence="2">
        <text>triacontanoyl-CoA + 2 NADPH + 2 H(+) = triacontan-1-ol + 2 NADP(+) + CoA</text>
        <dbReference type="Rhea" id="RHEA:81747"/>
        <dbReference type="ChEBI" id="CHEBI:15378"/>
        <dbReference type="ChEBI" id="CHEBI:28409"/>
        <dbReference type="ChEBI" id="CHEBI:57287"/>
        <dbReference type="ChEBI" id="CHEBI:57783"/>
        <dbReference type="ChEBI" id="CHEBI:58349"/>
        <dbReference type="ChEBI" id="CHEBI:76386"/>
    </reaction>
    <physiologicalReaction direction="left-to-right" evidence="2">
        <dbReference type="Rhea" id="RHEA:81748"/>
    </physiologicalReaction>
</comment>
<comment type="catalytic activity">
    <reaction evidence="2">
        <text>18-methylnonadecanoyl-CoA + 2 NADPH + 2 H(+) = 18-methylnonadecan-1-ol + 2 NADP(+) + CoA</text>
        <dbReference type="Rhea" id="RHEA:81767"/>
        <dbReference type="ChEBI" id="CHEBI:15378"/>
        <dbReference type="ChEBI" id="CHEBI:57287"/>
        <dbReference type="ChEBI" id="CHEBI:57783"/>
        <dbReference type="ChEBI" id="CHEBI:58349"/>
        <dbReference type="ChEBI" id="CHEBI:84914"/>
        <dbReference type="ChEBI" id="CHEBI:231999"/>
    </reaction>
    <physiologicalReaction direction="left-to-right" evidence="2">
        <dbReference type="Rhea" id="RHEA:81768"/>
    </physiologicalReaction>
</comment>
<comment type="catalytic activity">
    <reaction evidence="2">
        <text>20-methylheneicosanoyl-CoA + 2 NADPH + 2 H(+) = 20-methylheneicosan-1-ol + 2 NADP(+) + CoA</text>
        <dbReference type="Rhea" id="RHEA:81771"/>
        <dbReference type="ChEBI" id="CHEBI:15378"/>
        <dbReference type="ChEBI" id="CHEBI:57287"/>
        <dbReference type="ChEBI" id="CHEBI:57783"/>
        <dbReference type="ChEBI" id="CHEBI:58349"/>
        <dbReference type="ChEBI" id="CHEBI:84915"/>
        <dbReference type="ChEBI" id="CHEBI:232000"/>
    </reaction>
    <physiologicalReaction direction="left-to-right" evidence="2">
        <dbReference type="Rhea" id="RHEA:81772"/>
    </physiologicalReaction>
</comment>
<comment type="catalytic activity">
    <reaction evidence="2">
        <text>22-methyltricosanoyl-CoA + 2 NADPH + 2 H(+) = 22-methyltricosan-1-ol + 2 NADP(+) + CoA</text>
        <dbReference type="Rhea" id="RHEA:81775"/>
        <dbReference type="ChEBI" id="CHEBI:15378"/>
        <dbReference type="ChEBI" id="CHEBI:57287"/>
        <dbReference type="ChEBI" id="CHEBI:57783"/>
        <dbReference type="ChEBI" id="CHEBI:58349"/>
        <dbReference type="ChEBI" id="CHEBI:84916"/>
        <dbReference type="ChEBI" id="CHEBI:232001"/>
    </reaction>
    <physiologicalReaction direction="left-to-right" evidence="2">
        <dbReference type="Rhea" id="RHEA:81776"/>
    </physiologicalReaction>
</comment>
<comment type="catalytic activity">
    <reaction evidence="2">
        <text>24-methylpentacosanoyl-CoA + 2 NADPH + 2 H(+) = 24-methylpentacosan-1-ol + 2 NADP(+) + CoA</text>
        <dbReference type="Rhea" id="RHEA:81779"/>
        <dbReference type="ChEBI" id="CHEBI:15378"/>
        <dbReference type="ChEBI" id="CHEBI:57287"/>
        <dbReference type="ChEBI" id="CHEBI:57783"/>
        <dbReference type="ChEBI" id="CHEBI:58349"/>
        <dbReference type="ChEBI" id="CHEBI:84917"/>
        <dbReference type="ChEBI" id="CHEBI:232002"/>
    </reaction>
    <physiologicalReaction direction="left-to-right" evidence="2">
        <dbReference type="Rhea" id="RHEA:81780"/>
    </physiologicalReaction>
</comment>
<comment type="subcellular location">
    <subcellularLocation>
        <location evidence="2">Peroxisome membrane</location>
        <topology evidence="2">Single-pass membrane protein</topology>
    </subcellularLocation>
</comment>
<comment type="similarity">
    <text evidence="4">Belongs to the fatty acyl-CoA reductase family.</text>
</comment>
<name>FACR2_BOVIN</name>
<dbReference type="EC" id="1.2.1.84" evidence="2"/>
<dbReference type="EMBL" id="BC119968">
    <property type="protein sequence ID" value="AAI19969.1"/>
    <property type="molecule type" value="mRNA"/>
</dbReference>
<dbReference type="RefSeq" id="NP_001069490.1">
    <property type="nucleotide sequence ID" value="NM_001076022.1"/>
</dbReference>
<dbReference type="RefSeq" id="XP_005206959.1">
    <property type="nucleotide sequence ID" value="XM_005206902.5"/>
</dbReference>
<dbReference type="RefSeq" id="XP_010803676.1">
    <property type="nucleotide sequence ID" value="XM_010805374.4"/>
</dbReference>
<dbReference type="RefSeq" id="XP_010803677.1">
    <property type="nucleotide sequence ID" value="XM_010805375.2"/>
</dbReference>
<dbReference type="RefSeq" id="XP_059742529.1">
    <property type="nucleotide sequence ID" value="XM_059886546.1"/>
</dbReference>
<dbReference type="SMR" id="Q0P5J1"/>
<dbReference type="FunCoup" id="Q0P5J1">
    <property type="interactions" value="625"/>
</dbReference>
<dbReference type="STRING" id="9913.ENSBTAP00000014725"/>
<dbReference type="PaxDb" id="9913-ENSBTAP00000014725"/>
<dbReference type="Ensembl" id="ENSBTAT00000014725.6">
    <property type="protein sequence ID" value="ENSBTAP00000014725.5"/>
    <property type="gene ID" value="ENSBTAG00000011095.7"/>
</dbReference>
<dbReference type="GeneID" id="534380"/>
<dbReference type="KEGG" id="bta:534380"/>
<dbReference type="CTD" id="55711"/>
<dbReference type="VEuPathDB" id="HostDB:ENSBTAG00000011095"/>
<dbReference type="VGNC" id="VGNC:28864">
    <property type="gene designation" value="FAR2"/>
</dbReference>
<dbReference type="eggNOG" id="KOG1221">
    <property type="taxonomic scope" value="Eukaryota"/>
</dbReference>
<dbReference type="GeneTree" id="ENSGT00390000006367"/>
<dbReference type="HOGENOM" id="CLU_024661_0_0_1"/>
<dbReference type="InParanoid" id="Q0P5J1"/>
<dbReference type="OMA" id="WRFFIAR"/>
<dbReference type="OrthoDB" id="429813at2759"/>
<dbReference type="TreeFam" id="TF313011"/>
<dbReference type="Reactome" id="R-BTA-9640463">
    <property type="pathway name" value="Wax biosynthesis"/>
</dbReference>
<dbReference type="Proteomes" id="UP000009136">
    <property type="component" value="Chromosome 5"/>
</dbReference>
<dbReference type="Bgee" id="ENSBTAG00000011095">
    <property type="expression patterns" value="Expressed in zone of skin and 97 other cell types or tissues"/>
</dbReference>
<dbReference type="GO" id="GO:0005778">
    <property type="term" value="C:peroxisomal membrane"/>
    <property type="evidence" value="ECO:0000250"/>
    <property type="project" value="UniProtKB"/>
</dbReference>
<dbReference type="GO" id="GO:0005777">
    <property type="term" value="C:peroxisome"/>
    <property type="evidence" value="ECO:0000318"/>
    <property type="project" value="GO_Central"/>
</dbReference>
<dbReference type="GO" id="GO:0102965">
    <property type="term" value="F:alcohol-forming long-chain fatty acyl-CoA reductase activity"/>
    <property type="evidence" value="ECO:0007669"/>
    <property type="project" value="UniProtKB-EC"/>
</dbReference>
<dbReference type="GO" id="GO:0080019">
    <property type="term" value="F:alcohol-forming very long-chain fatty acyl-CoA reductase activity"/>
    <property type="evidence" value="ECO:0000250"/>
    <property type="project" value="UniProtKB"/>
</dbReference>
<dbReference type="GO" id="GO:0035336">
    <property type="term" value="P:long-chain fatty-acyl-CoA metabolic process"/>
    <property type="evidence" value="ECO:0000318"/>
    <property type="project" value="GO_Central"/>
</dbReference>
<dbReference type="CDD" id="cd05236">
    <property type="entry name" value="FAR-N_SDR_e"/>
    <property type="match status" value="1"/>
</dbReference>
<dbReference type="CDD" id="cd09071">
    <property type="entry name" value="FAR_C"/>
    <property type="match status" value="1"/>
</dbReference>
<dbReference type="FunFam" id="3.40.50.720:FF:000278">
    <property type="entry name" value="Fatty acyl-CoA reductase"/>
    <property type="match status" value="1"/>
</dbReference>
<dbReference type="Gene3D" id="3.40.50.720">
    <property type="entry name" value="NAD(P)-binding Rossmann-like Domain"/>
    <property type="match status" value="1"/>
</dbReference>
<dbReference type="InterPro" id="IPR026055">
    <property type="entry name" value="FAR"/>
</dbReference>
<dbReference type="InterPro" id="IPR033640">
    <property type="entry name" value="FAR_C"/>
</dbReference>
<dbReference type="InterPro" id="IPR013120">
    <property type="entry name" value="Far_NAD-bd"/>
</dbReference>
<dbReference type="InterPro" id="IPR036291">
    <property type="entry name" value="NAD(P)-bd_dom_sf"/>
</dbReference>
<dbReference type="PANTHER" id="PTHR11011:SF120">
    <property type="entry name" value="FATTY ACYL-COA REDUCTASE 2"/>
    <property type="match status" value="1"/>
</dbReference>
<dbReference type="PANTHER" id="PTHR11011">
    <property type="entry name" value="MALE STERILITY PROTEIN 2-RELATED"/>
    <property type="match status" value="1"/>
</dbReference>
<dbReference type="Pfam" id="PF07993">
    <property type="entry name" value="NAD_binding_4"/>
    <property type="match status" value="1"/>
</dbReference>
<dbReference type="Pfam" id="PF03015">
    <property type="entry name" value="Sterile"/>
    <property type="match status" value="1"/>
</dbReference>
<dbReference type="SUPFAM" id="SSF51735">
    <property type="entry name" value="NAD(P)-binding Rossmann-fold domains"/>
    <property type="match status" value="1"/>
</dbReference>
<feature type="chain" id="PRO_0000261400" description="Fatty acyl-CoA reductase 2">
    <location>
        <begin position="1"/>
        <end position="515"/>
    </location>
</feature>
<feature type="topological domain" description="Cytoplasmic" evidence="2">
    <location>
        <begin position="1"/>
        <end position="465"/>
    </location>
</feature>
<feature type="transmembrane region" description="Helical" evidence="3">
    <location>
        <begin position="466"/>
        <end position="484"/>
    </location>
</feature>
<feature type="topological domain" description="Peroxisomal" evidence="2">
    <location>
        <begin position="485"/>
        <end position="515"/>
    </location>
</feature>
<protein>
    <recommendedName>
        <fullName evidence="2">Fatty acyl-CoA reductase 2</fullName>
        <shortName>Far2</shortName>
        <ecNumber evidence="2">1.2.1.84</ecNumber>
    </recommendedName>
</protein>
<proteinExistence type="evidence at transcript level"/>
<evidence type="ECO:0000250" key="1">
    <source>
        <dbReference type="UniProtKB" id="Q7TNT2"/>
    </source>
</evidence>
<evidence type="ECO:0000250" key="2">
    <source>
        <dbReference type="UniProtKB" id="Q96K12"/>
    </source>
</evidence>
<evidence type="ECO:0000255" key="3"/>
<evidence type="ECO:0000305" key="4"/>
<reference key="1">
    <citation type="submission" date="2006-08" db="EMBL/GenBank/DDBJ databases">
        <authorList>
            <consortium name="NIH - Mammalian Gene Collection (MGC) project"/>
        </authorList>
    </citation>
    <scope>NUCLEOTIDE SEQUENCE [LARGE SCALE MRNA]</scope>
    <source>
        <strain>Hereford</strain>
        <tissue>Thalamus</tissue>
    </source>
</reference>
<accession>Q0P5J1</accession>
<gene>
    <name evidence="2" type="primary">FAR2</name>
</gene>
<organism>
    <name type="scientific">Bos taurus</name>
    <name type="common">Bovine</name>
    <dbReference type="NCBI Taxonomy" id="9913"/>
    <lineage>
        <taxon>Eukaryota</taxon>
        <taxon>Metazoa</taxon>
        <taxon>Chordata</taxon>
        <taxon>Craniata</taxon>
        <taxon>Vertebrata</taxon>
        <taxon>Euteleostomi</taxon>
        <taxon>Mammalia</taxon>
        <taxon>Eutheria</taxon>
        <taxon>Laurasiatheria</taxon>
        <taxon>Artiodactyla</taxon>
        <taxon>Ruminantia</taxon>
        <taxon>Pecora</taxon>
        <taxon>Bovidae</taxon>
        <taxon>Bovinae</taxon>
        <taxon>Bos</taxon>
    </lineage>
</organism>
<sequence>MSMIAAFYGGKSILITGATGFMGKVLMEKLFRTSPDLKVVYILVRPKQGQTLQQRVFQILDSKLFEKVKEVCPNVHEKIRAISADLNQNDFAISKEDMKELLSHTNIIFHCAATVRFDDHLRHAVQLNVTATQQLLLMASQMPKLEAFIHISTAFSNCNLKHIDEVVYPCPVEPKKIIDSMEWLDDAIIDEITPKLIGDWPNTYTYTKALGEVVVQQEGGNLNIAIIRPSIMGATWQEPFPGWVDNLNGPSGLIIAAGKGFLRSIRATPMAVADLIPADTVVNLTLAVGWYTAVHRPKSTLVYHCTSGNLNPCNWGKMGLQVLATFEKIPFERAFRRPNADFTTNNITTHYWNAVSHRAPAIIYDFYLRLTGRKPRMTKLMNRLLRTLSMLEYFVNRSWEWSTYNTEMLMSELSPEDQRVFNFDVRQLNWLEYIENYVLGVKKYLLKEDMAGIPEAKQHLKRLRNIHYLFNTALFLIAWRLLIARSQVARNVWFFIVSFCYKFLSYFRASSTLNV</sequence>